<reference key="1">
    <citation type="journal article" date="2011" name="MBio">
        <title>An insect nidovirus emerging from a primary tropical rainforest.</title>
        <authorList>
            <person name="Zirkel F."/>
            <person name="Kurth A."/>
            <person name="Quan P.L."/>
            <person name="Briese T."/>
            <person name="Ellerbrok H."/>
            <person name="Pauli G."/>
            <person name="Leendertz F.H."/>
            <person name="Lipkin W.I."/>
            <person name="Ziebuhr J."/>
            <person name="Drosten C."/>
            <person name="Junglen S."/>
        </authorList>
    </citation>
    <scope>NUCLEOTIDE SEQUENCE [GENOMIC RNA]</scope>
</reference>
<reference key="2">
    <citation type="journal article" date="2014" name="J. Virol.">
        <title>Characterization of an alphamesonivirus 3C-like protease defines a special group of nidovirus main proteases.</title>
        <authorList>
            <person name="Blanck S."/>
            <person name="Stinn A."/>
            <person name="Tsiklauri L."/>
            <person name="Zirkel F."/>
            <person name="Junglen S."/>
            <person name="Ziebuhr J."/>
        </authorList>
    </citation>
    <scope>FUNCTION (3C-LIKE PROTEINASE)</scope>
    <scope>PROTEOLYTIC CLEAVAGE (REPLICASE POLYPROTEIN 1AB)</scope>
    <scope>CATALYTIC ACTIVITY (3C-LIKE PROTEINASE)</scope>
    <scope>ACTIVE SITE (3C-LIKE PROTEINASE)</scope>
    <scope>MUTAGENESIS OF HIS-1434; 1375-ASN-TYR-1376; GLU-1460; ASP-1465; ASP-1467; GLU-1470; CYS-1539 AND 1699-ASN--SER-1701</scope>
</reference>
<reference key="3">
    <citation type="journal article" date="2016" name="J. Gen. Virol.">
        <title>Proteolytic processing of mesonivirus replicase polyproteins by the viral 3C-like protease.</title>
        <authorList>
            <person name="Blanck S."/>
            <person name="Ziebuhr J."/>
        </authorList>
    </citation>
    <scope>FUNCTION (3C-LIKE PROTEINASE)</scope>
    <scope>PROTEOLYTIC CLEAVAGE (REPLICASE POLYPROTEIN 1AB)</scope>
    <scope>RIBOSOMAL FRAMESHIFT</scope>
    <scope>CATALYTIC ACTIVITY (3C-LIKE PROTEINASE)</scope>
</reference>
<reference evidence="16 17" key="4">
    <citation type="journal article" date="2019" name="Virology">
        <title>Structural basis for catalysis and substrate specificity of a 3C-like cysteine protease from a mosquito mesonivirus.</title>
        <authorList>
            <person name="Kanitz M."/>
            <person name="Blanck S."/>
            <person name="Heine A."/>
            <person name="Gulyaeva A.A."/>
            <person name="Gorbalenya A.E."/>
            <person name="Ziebuhr J."/>
            <person name="Diederich W.E."/>
        </authorList>
    </citation>
    <scope>X-RAY CRYSTALLOGRAPHY (1.94 ANGSTROMS) OF 1387-1700</scope>
    <scope>ACTIVE SITE (3C-LIKE PROTEINASE)</scope>
    <scope>SUBUNIT (3C-LIKE PROTEINASE)</scope>
</reference>
<organismHost>
    <name type="scientific">Ochlerotatus harrisoni</name>
    <dbReference type="NCBI Taxonomy" id="1043727"/>
</organismHost>
<dbReference type="EC" id="3.4.22.-" evidence="9 10"/>
<dbReference type="EC" id="2.7.7.48" evidence="14"/>
<dbReference type="EC" id="3.6.4.12" evidence="14"/>
<dbReference type="EC" id="3.6.4.13" evidence="14"/>
<dbReference type="EC" id="2.1.1.56" evidence="14"/>
<dbReference type="EC" id="3.1.13.-" evidence="14"/>
<dbReference type="EC" id="2.1.1.57" evidence="14"/>
<dbReference type="EMBL" id="HM746600">
    <property type="protein sequence ID" value="AEH26445.1"/>
    <property type="molecule type" value="Genomic_RNA"/>
</dbReference>
<dbReference type="PDB" id="5LAC">
    <property type="method" value="X-ray"/>
    <property type="resolution" value="1.94 A"/>
    <property type="chains" value="A/B=1387-1700"/>
</dbReference>
<dbReference type="PDB" id="5LAK">
    <property type="method" value="X-ray"/>
    <property type="resolution" value="2.30 A"/>
    <property type="chains" value="A/B/C/D=1387-1700"/>
</dbReference>
<dbReference type="PDBsum" id="5LAC"/>
<dbReference type="PDBsum" id="5LAK"/>
<dbReference type="SMR" id="F8RL29"/>
<dbReference type="BRENDA" id="3.4.22.69">
    <property type="organism ID" value="17032"/>
</dbReference>
<dbReference type="Proteomes" id="UP000029741">
    <property type="component" value="Segment"/>
</dbReference>
<dbReference type="GO" id="GO:0016020">
    <property type="term" value="C:membrane"/>
    <property type="evidence" value="ECO:0007669"/>
    <property type="project" value="UniProtKB-SubCell"/>
</dbReference>
<dbReference type="GO" id="GO:0000175">
    <property type="term" value="F:3'-5'-RNA exonuclease activity"/>
    <property type="evidence" value="ECO:0007669"/>
    <property type="project" value="InterPro"/>
</dbReference>
<dbReference type="GO" id="GO:0005524">
    <property type="term" value="F:ATP binding"/>
    <property type="evidence" value="ECO:0007669"/>
    <property type="project" value="UniProtKB-KW"/>
</dbReference>
<dbReference type="GO" id="GO:0004197">
    <property type="term" value="F:cysteine-type endopeptidase activity"/>
    <property type="evidence" value="ECO:0007669"/>
    <property type="project" value="InterPro"/>
</dbReference>
<dbReference type="GO" id="GO:0004386">
    <property type="term" value="F:helicase activity"/>
    <property type="evidence" value="ECO:0007669"/>
    <property type="project" value="UniProtKB-KW"/>
</dbReference>
<dbReference type="GO" id="GO:0004483">
    <property type="term" value="F:mRNA (nucleoside-2'-O-)-methyltransferase activity"/>
    <property type="evidence" value="ECO:0007669"/>
    <property type="project" value="InterPro"/>
</dbReference>
<dbReference type="GO" id="GO:0003968">
    <property type="term" value="F:RNA-directed RNA polymerase activity"/>
    <property type="evidence" value="ECO:0007669"/>
    <property type="project" value="UniProtKB-KW"/>
</dbReference>
<dbReference type="GO" id="GO:0001147">
    <property type="term" value="F:transcription termination site sequence-specific DNA binding"/>
    <property type="evidence" value="ECO:0007669"/>
    <property type="project" value="TreeGrafter"/>
</dbReference>
<dbReference type="GO" id="GO:0008270">
    <property type="term" value="F:zinc ion binding"/>
    <property type="evidence" value="ECO:0007669"/>
    <property type="project" value="InterPro"/>
</dbReference>
<dbReference type="GO" id="GO:0032259">
    <property type="term" value="P:methylation"/>
    <property type="evidence" value="ECO:0007669"/>
    <property type="project" value="UniProtKB-KW"/>
</dbReference>
<dbReference type="GO" id="GO:0006508">
    <property type="term" value="P:proteolysis"/>
    <property type="evidence" value="ECO:0007669"/>
    <property type="project" value="UniProtKB-KW"/>
</dbReference>
<dbReference type="GO" id="GO:0006369">
    <property type="term" value="P:termination of RNA polymerase II transcription"/>
    <property type="evidence" value="ECO:0007669"/>
    <property type="project" value="TreeGrafter"/>
</dbReference>
<dbReference type="CDD" id="cd23187">
    <property type="entry name" value="Mesoniviridae_RdRp"/>
    <property type="match status" value="1"/>
</dbReference>
<dbReference type="CDD" id="cd18808">
    <property type="entry name" value="SF1_C_Upf1"/>
    <property type="match status" value="1"/>
</dbReference>
<dbReference type="CDD" id="cd21402">
    <property type="entry name" value="ZBD_mv_SF1_Hel-like"/>
    <property type="match status" value="1"/>
</dbReference>
<dbReference type="Gene3D" id="3.40.50.12190">
    <property type="match status" value="1"/>
</dbReference>
<dbReference type="Gene3D" id="3.40.50.300">
    <property type="entry name" value="P-loop containing nucleotide triphosphate hydrolases"/>
    <property type="match status" value="2"/>
</dbReference>
<dbReference type="InterPro" id="IPR043502">
    <property type="entry name" value="DNA/RNA_pol_sf"/>
</dbReference>
<dbReference type="InterPro" id="IPR045055">
    <property type="entry name" value="DNA2/NAM7-like"/>
</dbReference>
<dbReference type="InterPro" id="IPR041679">
    <property type="entry name" value="DNA2/NAM7-like_C"/>
</dbReference>
<dbReference type="InterPro" id="IPR038599">
    <property type="entry name" value="LAP1C-like_C_sf"/>
</dbReference>
<dbReference type="InterPro" id="IPR046438">
    <property type="entry name" value="NIV_2_O_MTASE"/>
</dbReference>
<dbReference type="InterPro" id="IPR046436">
    <property type="entry name" value="NIV_EXON"/>
</dbReference>
<dbReference type="InterPro" id="IPR027417">
    <property type="entry name" value="P-loop_NTPase"/>
</dbReference>
<dbReference type="InterPro" id="IPR033777">
    <property type="entry name" value="Peptidase_C107"/>
</dbReference>
<dbReference type="InterPro" id="IPR047187">
    <property type="entry name" value="SF1_C_Upf1"/>
</dbReference>
<dbReference type="PANTHER" id="PTHR10887">
    <property type="entry name" value="DNA2/NAM7 HELICASE FAMILY"/>
    <property type="match status" value="1"/>
</dbReference>
<dbReference type="PANTHER" id="PTHR10887:SF495">
    <property type="entry name" value="HELICASE SENATAXIN ISOFORM X1-RELATED"/>
    <property type="match status" value="1"/>
</dbReference>
<dbReference type="Pfam" id="PF13087">
    <property type="entry name" value="AAA_12"/>
    <property type="match status" value="1"/>
</dbReference>
<dbReference type="Pfam" id="PF13604">
    <property type="entry name" value="AAA_30"/>
    <property type="match status" value="1"/>
</dbReference>
<dbReference type="Pfam" id="PF17222">
    <property type="entry name" value="Peptidase_C107"/>
    <property type="match status" value="1"/>
</dbReference>
<dbReference type="SUPFAM" id="SSF56672">
    <property type="entry name" value="DNA/RNA polymerases"/>
    <property type="match status" value="1"/>
</dbReference>
<dbReference type="SUPFAM" id="SSF52540">
    <property type="entry name" value="P-loop containing nucleoside triphosphate hydrolases"/>
    <property type="match status" value="1"/>
</dbReference>
<dbReference type="PROSITE" id="PS51653">
    <property type="entry name" value="CV_ZBD"/>
    <property type="match status" value="1"/>
</dbReference>
<dbReference type="PROSITE" id="PS51955">
    <property type="entry name" value="NIV_2_O_MTASE"/>
    <property type="match status" value="1"/>
</dbReference>
<dbReference type="PROSITE" id="PS51953">
    <property type="entry name" value="NIV_EXON"/>
    <property type="match status" value="1"/>
</dbReference>
<comment type="function">
    <molecule>3C-like proteinase</molecule>
    <text evidence="9 10">Cysteine protease responsible for the majority of cleavages of the polyprotein (PubMed:25231310, PubMed:26977900). Recognizes substrates containing the core sequence [NT]-[EHKQSY]-|-[AGNST] (PubMed:25231310).</text>
</comment>
<comment type="function">
    <text evidence="1">The helicase which contains a zinc finger structure displays RNA and DNA duplex-unwinding activities with 5' to 3' polarity.</text>
</comment>
<comment type="function">
    <molecule>RNA-directed RNA polymerase</molecule>
    <text evidence="3">RNA-directed RNA polymerase that catalyzes the transcription of viral genomic and subgenomic RNAs.</text>
</comment>
<comment type="function">
    <molecule>Exoribonuclease/N7-guanine methyltransferase</molecule>
    <text evidence="4">Catalyzes the RNA N7-guanylyltransferase reaction to methylate the core cap structure GpppN-RNA into the type-0 cap (m)GpppN-RNA.</text>
</comment>
<comment type="catalytic activity">
    <molecule>Exoribonuclease/N7-guanine methyltransferase</molecule>
    <reaction>
        <text>a 5'-end (5'-triphosphoguanosine)-ribonucleoside in mRNA + S-adenosyl-L-methionine = a 5'-end (N(7)-methyl 5'-triphosphoguanosine)-ribonucleoside in mRNA + S-adenosyl-L-homocysteine</text>
        <dbReference type="Rhea" id="RHEA:67008"/>
        <dbReference type="Rhea" id="RHEA-COMP:17166"/>
        <dbReference type="Rhea" id="RHEA-COMP:17167"/>
        <dbReference type="ChEBI" id="CHEBI:57856"/>
        <dbReference type="ChEBI" id="CHEBI:59789"/>
        <dbReference type="ChEBI" id="CHEBI:156461"/>
        <dbReference type="ChEBI" id="CHEBI:167617"/>
        <dbReference type="EC" id="2.1.1.56"/>
    </reaction>
    <physiologicalReaction direction="left-to-right" evidence="4">
        <dbReference type="Rhea" id="RHEA:67009"/>
    </physiologicalReaction>
</comment>
<comment type="catalytic activity">
    <molecule>RNA-directed RNA polymerase</molecule>
    <reaction>
        <text>RNA(n) + a ribonucleoside 5'-triphosphate = RNA(n+1) + diphosphate</text>
        <dbReference type="Rhea" id="RHEA:21248"/>
        <dbReference type="Rhea" id="RHEA-COMP:14527"/>
        <dbReference type="Rhea" id="RHEA-COMP:17342"/>
        <dbReference type="ChEBI" id="CHEBI:33019"/>
        <dbReference type="ChEBI" id="CHEBI:61557"/>
        <dbReference type="ChEBI" id="CHEBI:140395"/>
        <dbReference type="EC" id="2.7.7.48"/>
    </reaction>
</comment>
<comment type="catalytic activity">
    <molecule>Helicase</molecule>
    <reaction>
        <text>ATP + H2O = ADP + phosphate + H(+)</text>
        <dbReference type="Rhea" id="RHEA:13065"/>
        <dbReference type="ChEBI" id="CHEBI:15377"/>
        <dbReference type="ChEBI" id="CHEBI:15378"/>
        <dbReference type="ChEBI" id="CHEBI:30616"/>
        <dbReference type="ChEBI" id="CHEBI:43474"/>
        <dbReference type="ChEBI" id="CHEBI:456216"/>
        <dbReference type="EC" id="3.6.4.12"/>
    </reaction>
</comment>
<comment type="catalytic activity">
    <molecule>Helicase</molecule>
    <reaction>
        <text>ATP + H2O = ADP + phosphate + H(+)</text>
        <dbReference type="Rhea" id="RHEA:13065"/>
        <dbReference type="ChEBI" id="CHEBI:15377"/>
        <dbReference type="ChEBI" id="CHEBI:15378"/>
        <dbReference type="ChEBI" id="CHEBI:30616"/>
        <dbReference type="ChEBI" id="CHEBI:43474"/>
        <dbReference type="ChEBI" id="CHEBI:456216"/>
        <dbReference type="EC" id="3.6.4.13"/>
    </reaction>
</comment>
<comment type="catalytic activity">
    <molecule>Putative 2'-O-methyl transferase</molecule>
    <reaction>
        <text>a 5'-end (N(7)-methyl 5'-triphosphoguanosine)-ribonucleoside in mRNA + S-adenosyl-L-methionine = a 5'-end (N(7)-methyl 5'-triphosphoguanosine)-(2'-O-methyl-ribonucleoside) in mRNA + S-adenosyl-L-homocysteine + H(+)</text>
        <dbReference type="Rhea" id="RHEA:67020"/>
        <dbReference type="Rhea" id="RHEA-COMP:17167"/>
        <dbReference type="Rhea" id="RHEA-COMP:17168"/>
        <dbReference type="ChEBI" id="CHEBI:15378"/>
        <dbReference type="ChEBI" id="CHEBI:57856"/>
        <dbReference type="ChEBI" id="CHEBI:59789"/>
        <dbReference type="ChEBI" id="CHEBI:156461"/>
        <dbReference type="ChEBI" id="CHEBI:167609"/>
        <dbReference type="EC" id="2.1.1.57"/>
    </reaction>
    <physiologicalReaction direction="left-to-right" evidence="2">
        <dbReference type="Rhea" id="RHEA:67021"/>
    </physiologicalReaction>
</comment>
<comment type="subunit">
    <molecule>3C-like proteinase</molecule>
    <text evidence="11">Homodimer.</text>
</comment>
<comment type="subcellular location">
    <molecule>Putative non-structural protein 1</molecule>
    <subcellularLocation>
        <location evidence="14">Membrane</location>
    </subcellularLocation>
</comment>
<comment type="PTM">
    <molecule>Replicase polyprotein 1ab</molecule>
    <text evidence="9 10">Specific enzymatic cleavages in vivo by its own protease yield mature proteins (PubMed:25231310, PubMed:26977900). 3CL-PRO is autocatalytically processed (PubMed:25231310, PubMed:26977900).</text>
</comment>
<comment type="miscellaneous">
    <text evidence="10">Produced by -1 ribosomal frameshifting at the 1a-1b genes boundary.</text>
</comment>
<name>R1AB_AMV79</name>
<sequence length="5088" mass="588268">MTYHDYALKDNAVLERDHKLALDNLVTNVIQYWTPILTMLLLAIYILKKIMQNPFVGPVSDNPLKRALQWIIFVFTRRNLYYQTPVFTRDESRLNVFLHNDFARLDRNTLNGYCKICNLYGHNHTEKHNPTIDALVLAKTCKLLRYNDKVTKPLAYTVHNIRAYEKNTKTFADTFGTTTTNIPTKYALAPKKAVADLTTIESNLGPIYVNNTIAYPHLGFIAYNNKQHLQELLANVTVVLDTVMVYTQYELDDATINIRKSNIKLHFVNDFDLTNALTNELKDPRTPWLLKAKKSSNKALEIEDDTEAEETQKTKRKGKLQPQTQLLQHTLAKQSKPARRQSHLTFGPAYMTMLCLISIMSPTQAKVCTTYEILDQADLYCNNLQNLTIAKYHAYANYEHMNKQCFSTDGAEFKDLVRLSVSNALNLNNVIKPLPKDDYILKAFSNALPLNTHVLSDYTTILDLQILMQFYNLNGSNVLYTENYSESEDYTGKVIQLLAQGTGGICKAPACIKFTGLDPTATDVEVKITERLTKRIKHQEHGKSLIIDPSCRKTCYCMRKPEIKPEPVEPVKYAPPAEFYTQLRYFQNHELRMYDDFEMGVLRYNNYTLSTFIYSNDTCIQTRGVHCVYNSEHFVITRVYNNLGNYLECGVNQEFCESLQQEFMFNEPQLVITESSTAEVSAQYKKICANHYTTLQSKYPLIEKLFWSNFNVSVNRALAAKEPATFLIVYDTPAIVKTIIADIIETMEECYGNTAIKLTSNDFNKLDDYNDFLIEHKPLLAKHKIMLIEDIDLIKVSMARAIYTIFDTYNPLVYGVFVLGTLNHKRYNETLAFNYYNGQTPTSYVEGILTNNWRELEDHTRQPLIIRVTDNVHTILARQLVTPPAKLAETMSKIPPLNNTSKVINTLTHYSAHILRTVENDSTQAYTYINKSVHNITDYVNGTVHNFTDYVYTAYNTTKNHIVTRYNNMLMAVYDIQLNFYNRYPLRQDFYHKGMRAFDLGRVCDFLHHSDTIVLYQDCINQKLDTIHVIKLRYGQNANAYHMYPLELPHTKQTIYELSDAIGFVYKDRKYNYFRTLFTNPGEYVLTIRENYLEYCKSDNSPTPAFAPDVPLQCFAYITGVQVVDSFIAEFGLFLMLYIAALIIILAIAITIRDNTMMMFLKLITIFAYTFGHLLLTPRVYGSYMFLSIYNILPYTSNTSYGCLLMLGALAIAVIDLLAYITQRYRSEFTKNVLQLVTLFFEIAAVTKYILIPYIFTSYGLVLTIIVSYVAYRYIHSRRPNYLKATVSNATAHADWVAYRNTTREKTDEAAKSNLSKIINTSVAEIQKDQLLECLYLAACHRATVASSTYNPKHYLHIPNYNTKIMFARDNELMNYSVLSTDFKNKSAASNPSISHIVLEMPVAINPLIKYTTRTSVSSLRGAVVNGYIYIQRHLFGSKKQEFEACYNNGKGLLNCKNLERSKYDIDSAELIGTLIRIPLHDKHSIPHISIHPDPLSYNGPVTLYLSRYDTELNKDVLCVHTGFMSEGHHDIKTVFGDCGGMLFDPKGRLLGLHCAGSDDVVFMDTTTGKSNIWTSYKLQHPSEIMITLNNEINLPNPANYDFETTKVVYQHPLRNVCATLETLQHLTNKTNAKLPYDSRLLSDFNITAEQYNQYGYYIDYNNFVNNFNRYTTTTIGTKSFETCIKYGLMDNKKPDYYNQSATIFNSPEHSSSGFDNTMDVLYVFVYMFTHTHPAFYIAAACVFGLFFVKMNRHLKMILSSIIFAIPHIYVNYYYGLVYMPLKWRKQITALAIRYNPYTAVAIRYNKNLNIAKDVAKELGTPKNLCTHLSTLLKCIKPYAAFNDLSQVINNVDDLMANWANTYNPEKLLKQYIEEIYKLYPILFIVFERIESYEDQIKTILSFISDTGEFDLNGFEIHFDEKEHTTNIIDTNVEDIREKLMAAKASLIALKNMNSEFDIETINSANIGELVRYLIISSTPETLDRDLLARTTELLVRHIHQLRDDSEHNENLITLLSEIYKHKDFLTASHLTSNLRDRNYVMNNLVRVIALFNKQINMQVAQKQYEARRIEDVRKKESKQIMEQNNRIRKMQRQNQNIASAIVHMVHACFANRFMLQNEAQKIMKALLGTNLELDPSDAEMQYYTAYRTGQVLTNQAIVTNFTTLTTILWTGNGYQTVPSMCGLHEFTCTATHKHGYFNCTMEIKDAWYKHAEECTKCKSYYRANKHPRCGAIYDTTVKRIPTLSNFIARYRSCPSCMPCTQCLSHREPGCESASYHIADTAHYQNQAYLTPINIKPDNLEYNFVDVNNGDVNAIYNGRIWLMRRTTAITPPPARYRNITNLKLKQTDPEGYYYISEVCPTDLAILNAMINQIQLKLLDRTVLNNENHVENDNTIKFNTPLNDTTLDDLRTKHKHLLVMKLKPDSEHHFIEVLDFVRMNNLPIFIAHVTYAENDVNHATIYVNYLQAWRNEILDDVTKTCDILEKIIKHPLDFQSGLVLLSRNSNVARYHQLCTNTNNGIRHTIDISCNKTSISYIDEVNNNVNVKIKQHIVKEYKIYEMLINQYPNLFLIEHKLVNFTIPHLLRYNMTALSFADLYGLIKEENWHPIYDTLPQVTYHKINDDLLLKIKSHTPSPQHTCCMLCRRFLVEFGLLLHKLNYKVFETTRAILTHYDFVLTADNVDLNGILDFEDYKLKKSTIAHDVKSQLRIMQPYYHALYSFYEHTGMYFISQPIYNSIVDPSLDLIQQFELAVEAIRNLPLDVKFDDTPLYRPTIQHLTEYLKLNIYAMEPEPLWNCYDTMNCPQIELPEIDNAITSIITKPTRPLSEYIELNHTTVKNLDGDVYCKIHHNEINNLQDILYSKPTDVTIHELYIVDHPYELESHNRMLRTSLNIWLHNLYDANVNLSHFDSINYDKTRKASFPIVGTVPAIPLRDCEVCQDEIPDDLKDVYDFGSCVHARAQLSDYTTPRKLNPLIEFDPALLRHGEFLPNNDYAYTMKTKPDHLIDCELKDYIDSTGLTALIPPLDINPAVHDPETTYSSSYYIKTPSETSIRQDLELFNQNTAGSVSPTVFLMAIELLHQLLTEEISASDGKPNCPMVPSEVPVRNKHKSAGTPYRKFGDSEFMRELYGNYRDAIVYHKRHSADQQLTLTINKVAPSKNHRDRTILAISINKSEPGRSLYRWNLDKIKYTSSLGGPILIGFTAQYGGWDKLYKYLYKNSPADHPDIAEHAVLGGKDYPKWDRRISNMLQLTTTTVLYSLIDPNTQSKLNNATPAQTWHEYMAETTQVLFDYLVFGNELYQKPGGVTSGNSRTADGNSLLHLLIDFYAIISQLIQSTPENVHLEVNLRNALCKTVFTKIPSDYIDSSCVTLRNTDILHTIRRRVAKGAYLSDDGLIVIDPRIIRYDDFMSVSHLISHYMIAQNKHKYHIDAIQRYAREFLSQDTIKFGDMVYPIPEFGRMYTAMLLSDNKNTLDPQINITRLLALFSYLYIYYFKYVDQPTHPILKFLDALRTYIELKLNTTDEIFLDCIKVPDLQDVEFDLKNCDLYENFDYLWGLDQSSAYMDYLCKYKHRYRNLSLFKRQLIQHHEEAQLHNENKLKNKGRLITYNCYVCGENAYLTCATCERAFCNSADTNHGSHMEQHLQYSGHTCLYLNCKTVKCHHCFTTDINLLYTTGRDHYCEAHKPKNAVRILNHNDNTKLPPLLYLCVTDTKRVTFYEQCYINYTKAHPTYAISKEQFMGLIQLYLHQDYTLPVNQLANRIRVSLQLSSYGVVRPYHQLIMQLTKLESKVLDSSVVDIPITLINSQEIGTYYIEIPREHKLDQHSTYSYLMGTREVSFTPNYHRLSSTNTHIWLTDTQIPNYCTFIRQRRLNTLSAILRNTTQHVPEYTRLLLEWNQQLPITAKPFAEFKPSLKIPAQPNVTDNINMLLKELNEKRFKIMFGGPGTGKSHTLSILINHLHEKGLRILVYTPSHQSANALLYKIANLIKRRTIQNPGLVRIITDGMKEEIKPHPYITYRTNMLDKDRICVTTIQSFSTVQHVKDIDLVILDEFSLTSDNYLLTGLAHLKPSTRVLFSGDPRQLSGVDEVRKPLQSRFHTLINYYTETYPREVHVLKYHFRCHPTIFQYFKDLYYADKDMECATSIADRIIRPLNPINTVQVSEPTFRNQGVILNQDEADKVLEILVLVNQTLALHSSYEYQPTIAIICSYKSQLQNFISLQQQKILSDNVNLSTIDSAQGDEFDIVILCLSQINNFTLNPNRFNVAISRAKSVLFITVPPIDKNPAFLFKDVYETLHKHNLTYFKIYNTSGKAILSLDSPTTLKTQAEKMPYTNVRNLDKETHTMQRKFPMNIVMDDCICFDAEFLNPRDNLQEPVMLSYGFSSKYGKRRIAGIPVRYIKDKFNRIIPHKYNYKDNNKPLTSTYSCDWMKKQHPDQYKHLLTSVLQGIRNDTTVDLRPLLNFCVDNMHVKPVIVTWSGASDHCFLRAHTLYPDISTVCNITTRCTSQPIYASPQGRHTYYLCQYHAHQLKDHINITHFVNLEIIDLKVDRNQYTNERTLRVYHNDYLKLTLDLDNVASNSLTDCHTRYCRTIHAPPTPHDPLDDAIMTQCIYQSFVLSHLEKLAYEPQANLKAFTSMDYRLKNFNPEMCKLRRELQKVWYEKYIDTKKTHCNMGCGKEPLQQALHNIDVLQGKSNPQNNMNTHTCDSEEHIYFDSHWYKDGGFKKPSYIFSDINKEHYYKLGTTGLCLYLNSKYAKYVHEYRTVSGNDVFKSLYSPYCDLGRKPHQAVIEPSCSIPDCIITSNIGERFQTLVCNVHQDQMELISKIAQATKYGYQFIYTGKILLNNHAALAKAPLDWDHLTLEIPGYNTRKQHSSHMTTKALGILHILQDSMLYTNRKTLNPNLPVILPGSASYLGDTVLANEMSKTLKQTKFVHIDPRLKIDNNTTHHRKTLMEMLDIGYTTELIISDIHDNNNPWIPELMEYTLKYLIDTGTLIMKITSRGATEAVLQQLEHMAKNFTYVRVCNLNAVTFSSELWIVFANKRKPPVQGWTSHELRAELRKHWYSMTRSIIQPLMRARQSVFRYSPK</sequence>
<gene>
    <name evidence="15" type="primary">pp1ab</name>
    <name evidence="15" type="ORF">CAVV_gp1</name>
</gene>
<keyword id="KW-0002">3D-structure</keyword>
<keyword id="KW-0067">ATP-binding</keyword>
<keyword id="KW-0068">Autocatalytic cleavage</keyword>
<keyword id="KW-0269">Exonuclease</keyword>
<keyword id="KW-0347">Helicase</keyword>
<keyword id="KW-0378">Hydrolase</keyword>
<keyword id="KW-0472">Membrane</keyword>
<keyword id="KW-0489">Methyltransferase</keyword>
<keyword id="KW-0540">Nuclease</keyword>
<keyword id="KW-0547">Nucleotide-binding</keyword>
<keyword id="KW-0548">Nucleotidyltransferase</keyword>
<keyword id="KW-0645">Protease</keyword>
<keyword id="KW-1185">Reference proteome</keyword>
<keyword id="KW-0696">RNA-directed RNA polymerase</keyword>
<keyword id="KW-0788">Thiol protease</keyword>
<keyword id="KW-0808">Transferase</keyword>
<keyword id="KW-0812">Transmembrane</keyword>
<keyword id="KW-1133">Transmembrane helix</keyword>
<keyword id="KW-0693">Viral RNA replication</keyword>
<keyword id="KW-0862">Zinc</keyword>
<accession>F8RL29</accession>
<feature type="chain" id="PRO_0000460675" description="Replicase polyprotein 1ab">
    <location>
        <begin position="1"/>
        <end position="5088"/>
    </location>
</feature>
<feature type="chain" id="PRO_0000460676" description="Putative non-structural protein 1">
    <location>
        <begin position="1"/>
        <end position="1386"/>
    </location>
</feature>
<feature type="chain" id="PRO_0000460677" description="3C-like proteinase">
    <location>
        <begin position="1387"/>
        <end position="1700"/>
    </location>
</feature>
<feature type="chain" id="PRO_0000460678" description="Putative non-structural protein 3">
    <location>
        <begin position="1701"/>
        <end position="1807"/>
    </location>
</feature>
<feature type="chain" id="PRO_0000460679" description="Putative non-structural protein 4">
    <location>
        <begin position="1808"/>
        <end position="2119"/>
    </location>
</feature>
<feature type="chain" id="PRO_0000460680" description="Putative non-structural protein 5">
    <location>
        <begin position="2120"/>
        <end position="2156"/>
    </location>
</feature>
<feature type="chain" id="PRO_0000460681" description="Putative non-structural protein 6">
    <location>
        <begin position="2157"/>
        <end position="2287"/>
    </location>
</feature>
<feature type="chain" id="PRO_0000460682" description="Putative non-structural protein 7">
    <location>
        <begin position="2288"/>
        <end position="2386"/>
    </location>
</feature>
<feature type="chain" id="PRO_0000460683" description="Putative non-structural protein 8">
    <location>
        <begin position="2387"/>
        <end position="2504"/>
    </location>
</feature>
<feature type="chain" id="PRO_0000460684" description="Putative non-structural protein 9">
    <location>
        <begin position="2387"/>
        <end position="2504"/>
    </location>
</feature>
<feature type="chain" id="PRO_0000460685" description="RNA-directed RNA polymerase">
    <location>
        <begin position="2505"/>
        <end position="3602"/>
    </location>
</feature>
<feature type="chain" id="PRO_0000460686" description="Helicase">
    <location>
        <begin position="3603"/>
        <end position="4326"/>
    </location>
</feature>
<feature type="chain" id="PRO_0000460687" description="Exoribonuclease/N7-guanine methyltransferase">
    <location>
        <begin position="4327"/>
        <end position="4847"/>
    </location>
</feature>
<feature type="chain" id="PRO_0000460688" description="Putative 2'-O-methyl transferase" evidence="5">
    <location>
        <begin position="4848"/>
        <end position="5088"/>
    </location>
</feature>
<feature type="transmembrane region" description="Helical" evidence="5">
    <location>
        <begin position="26"/>
        <end position="46"/>
    </location>
</feature>
<feature type="transmembrane region" description="Helical" evidence="5">
    <location>
        <begin position="343"/>
        <end position="363"/>
    </location>
</feature>
<feature type="transmembrane region" description="Helical" evidence="5">
    <location>
        <begin position="1132"/>
        <end position="1152"/>
    </location>
</feature>
<feature type="transmembrane region" description="Helical" evidence="5">
    <location>
        <begin position="1156"/>
        <end position="1176"/>
    </location>
</feature>
<feature type="transmembrane region" description="Helical" evidence="5">
    <location>
        <begin position="1201"/>
        <end position="1221"/>
    </location>
</feature>
<feature type="transmembrane region" description="Helical" evidence="5">
    <location>
        <begin position="1250"/>
        <end position="1270"/>
    </location>
</feature>
<feature type="transmembrane region" description="Helical" evidence="5">
    <location>
        <begin position="1729"/>
        <end position="1749"/>
    </location>
</feature>
<feature type="transmembrane region" description="Helical" evidence="5">
    <location>
        <begin position="1758"/>
        <end position="1778"/>
    </location>
</feature>
<feature type="domain" description="ExoN" evidence="6">
    <location>
        <begin position="4351"/>
        <end position="4616"/>
    </location>
</feature>
<feature type="domain" description="Nidovirus-type SAM-dependent 2'-O-MTase" evidence="7">
    <location>
        <begin position="4844"/>
        <end position="5088"/>
    </location>
</feature>
<feature type="region of interest" description="Disordered" evidence="8">
    <location>
        <begin position="301"/>
        <end position="323"/>
    </location>
</feature>
<feature type="region of interest" description="Disordered" evidence="8">
    <location>
        <begin position="3093"/>
        <end position="3112"/>
    </location>
</feature>
<feature type="active site" description="For 3C-like proteinase" evidence="9 11">
    <location>
        <position position="1434"/>
    </location>
</feature>
<feature type="active site" description="For 3C-like proteinase" evidence="9 11">
    <location>
        <position position="1539"/>
    </location>
</feature>
<feature type="active site" evidence="6">
    <location>
        <position position="4362"/>
    </location>
</feature>
<feature type="active site" evidence="6">
    <location>
        <position position="4364"/>
    </location>
</feature>
<feature type="active site" evidence="6">
    <location>
        <position position="4481"/>
    </location>
</feature>
<feature type="active site" evidence="6">
    <location>
        <position position="4599"/>
    </location>
</feature>
<feature type="active site" evidence="6">
    <location>
        <position position="4604"/>
    </location>
</feature>
<feature type="active site" evidence="7">
    <location>
        <position position="4880"/>
    </location>
</feature>
<feature type="active site" evidence="7">
    <location>
        <position position="4969"/>
    </location>
</feature>
<feature type="active site" evidence="7">
    <location>
        <position position="4998"/>
    </location>
</feature>
<feature type="active site" evidence="7">
    <location>
        <position position="5035"/>
    </location>
</feature>
<feature type="binding site" evidence="6">
    <location>
        <position position="4498"/>
    </location>
    <ligand>
        <name>Zn(2+)</name>
        <dbReference type="ChEBI" id="CHEBI:29105"/>
    </ligand>
</feature>
<feature type="binding site" evidence="6">
    <location>
        <position position="4504"/>
    </location>
    <ligand>
        <name>Zn(2+)</name>
        <dbReference type="ChEBI" id="CHEBI:29105"/>
    </ligand>
</feature>
<feature type="binding site" evidence="6">
    <location>
        <position position="4522"/>
    </location>
    <ligand>
        <name>Zn(2+)</name>
        <dbReference type="ChEBI" id="CHEBI:29105"/>
    </ligand>
</feature>
<feature type="binding site" evidence="6">
    <location>
        <position position="4525"/>
    </location>
    <ligand>
        <name>Zn(2+)</name>
        <dbReference type="ChEBI" id="CHEBI:29105"/>
    </ligand>
</feature>
<feature type="site" description="Cleavage; by 3CL-PRO" evidence="9 10">
    <location>
        <begin position="1386"/>
        <end position="1387"/>
    </location>
</feature>
<feature type="site" description="Cleavage; by 3CL-PRO" evidence="9 10">
    <location>
        <begin position="1700"/>
        <end position="1701"/>
    </location>
</feature>
<feature type="site" description="Cleavage; by 3CL-PRO" evidence="10">
    <location>
        <begin position="1807"/>
        <end position="1808"/>
    </location>
</feature>
<feature type="site" description="Cleavage; by 3CL-PRO" evidence="10">
    <location>
        <begin position="2119"/>
        <end position="2120"/>
    </location>
</feature>
<feature type="site" description="Cleavage; by 3CL-PRO" evidence="10">
    <location>
        <begin position="2156"/>
        <end position="2157"/>
    </location>
</feature>
<feature type="site" description="Cleavage; by 3CL-PRO" evidence="10">
    <location>
        <begin position="2287"/>
        <end position="2288"/>
    </location>
</feature>
<feature type="site" description="Cleavage; by 3CL-PRO" evidence="10">
    <location>
        <begin position="2386"/>
        <end position="2387"/>
    </location>
</feature>
<feature type="site" description="Cleavage; by 3CL-PRO" evidence="10">
    <location>
        <begin position="2504"/>
        <end position="2505"/>
    </location>
</feature>
<feature type="site" description="Cleavage; by 3CL-PRO" evidence="10">
    <location>
        <begin position="3602"/>
        <end position="3603"/>
    </location>
</feature>
<feature type="site" description="Cleavage; by 3CL-PRO" evidence="10">
    <location>
        <begin position="4326"/>
        <end position="4327"/>
    </location>
</feature>
<feature type="site" description="Cleavage; by 3CL-PRO" evidence="10">
    <location>
        <begin position="4847"/>
        <end position="4848"/>
    </location>
</feature>
<feature type="mutagenesis site" description="Complete loss of polyprotein cleavage at this site." evidence="9">
    <original>NY</original>
    <variation>AA</variation>
    <location>
        <begin position="1375"/>
        <end position="1376"/>
    </location>
</feature>
<feature type="mutagenesis site" description="Complete loss of polyprotein cleavage at this site." evidence="9">
    <original>NK</original>
    <variation>AA</variation>
    <location>
        <begin position="1385"/>
        <end position="1386"/>
    </location>
</feature>
<feature type="mutagenesis site" description="Complete loss of proteolytic activity." evidence="9">
    <original>H</original>
    <variation>A</variation>
    <location>
        <position position="1434"/>
    </location>
</feature>
<feature type="mutagenesis site" description="No effect on proteolytic activity." evidence="9">
    <original>E</original>
    <variation>A</variation>
    <location>
        <position position="1460"/>
    </location>
</feature>
<feature type="mutagenesis site" description="No effect on proteolytic activity." evidence="9">
    <original>D</original>
    <variation>A</variation>
    <location>
        <position position="1465"/>
    </location>
</feature>
<feature type="mutagenesis site" description="No effect on proteolytic activity." evidence="9">
    <original>D</original>
    <variation>A</variation>
    <location>
        <position position="1467"/>
    </location>
</feature>
<feature type="mutagenesis site" description="No effect on proteolytic activity." evidence="9">
    <original>E</original>
    <variation>A</variation>
    <location>
        <position position="1470"/>
    </location>
</feature>
<feature type="mutagenesis site" description="Complete loss of proteolytic activity." evidence="9">
    <original>C</original>
    <variation>A</variation>
    <location>
        <position position="1539"/>
    </location>
</feature>
<feature type="mutagenesis site" description="Complete loss of polyprotein cleavage at this site." evidence="9">
    <original>NQS</original>
    <variation>AAA</variation>
    <location>
        <begin position="1699"/>
        <end position="1701"/>
    </location>
</feature>
<feature type="turn" evidence="18">
    <location>
        <begin position="1388"/>
        <end position="1390"/>
    </location>
</feature>
<feature type="helix" evidence="18">
    <location>
        <begin position="1403"/>
        <end position="1405"/>
    </location>
</feature>
<feature type="strand" evidence="18">
    <location>
        <begin position="1408"/>
        <end position="1412"/>
    </location>
</feature>
<feature type="strand" evidence="18">
    <location>
        <begin position="1417"/>
        <end position="1421"/>
    </location>
</feature>
<feature type="strand" evidence="18">
    <location>
        <begin position="1423"/>
        <end position="1425"/>
    </location>
</feature>
<feature type="strand" evidence="18">
    <location>
        <begin position="1428"/>
        <end position="1432"/>
    </location>
</feature>
<feature type="helix" evidence="18">
    <location>
        <begin position="1433"/>
        <end position="1435"/>
    </location>
</feature>
<feature type="helix" evidence="18">
    <location>
        <begin position="1443"/>
        <end position="1447"/>
    </location>
</feature>
<feature type="helix" evidence="18">
    <location>
        <begin position="1448"/>
        <end position="1455"/>
    </location>
</feature>
<feature type="turn" evidence="18">
    <location>
        <begin position="1461"/>
        <end position="1463"/>
    </location>
</feature>
<feature type="helix" evidence="18">
    <location>
        <begin position="1466"/>
        <end position="1468"/>
    </location>
</feature>
<feature type="strand" evidence="18">
    <location>
        <begin position="1470"/>
        <end position="1472"/>
    </location>
</feature>
<feature type="strand" evidence="18">
    <location>
        <begin position="1475"/>
        <end position="1482"/>
    </location>
</feature>
<feature type="helix" evidence="18">
    <location>
        <begin position="1495"/>
        <end position="1497"/>
    </location>
</feature>
<feature type="strand" evidence="18">
    <location>
        <begin position="1499"/>
        <end position="1510"/>
    </location>
</feature>
<feature type="turn" evidence="18">
    <location>
        <begin position="1511"/>
        <end position="1514"/>
    </location>
</feature>
<feature type="strand" evidence="18">
    <location>
        <begin position="1515"/>
        <end position="1526"/>
    </location>
</feature>
<feature type="helix" evidence="18">
    <location>
        <begin position="1536"/>
        <end position="1538"/>
    </location>
</feature>
<feature type="strand" evidence="18">
    <location>
        <begin position="1542"/>
        <end position="1544"/>
    </location>
</feature>
<feature type="strand" evidence="18">
    <location>
        <begin position="1550"/>
        <end position="1559"/>
    </location>
</feature>
<feature type="turn" evidence="18">
    <location>
        <begin position="1566"/>
        <end position="1568"/>
    </location>
</feature>
<feature type="turn" evidence="19">
    <location>
        <begin position="1573"/>
        <end position="1576"/>
    </location>
</feature>
<feature type="strand" evidence="18">
    <location>
        <begin position="1583"/>
        <end position="1587"/>
    </location>
</feature>
<feature type="strand" evidence="18">
    <location>
        <begin position="1594"/>
        <end position="1597"/>
    </location>
</feature>
<feature type="turn" evidence="18">
    <location>
        <begin position="1600"/>
        <end position="1603"/>
    </location>
</feature>
<feature type="strand" evidence="18">
    <location>
        <begin position="1609"/>
        <end position="1614"/>
    </location>
</feature>
<feature type="helix" evidence="18">
    <location>
        <begin position="1617"/>
        <end position="1628"/>
    </location>
</feature>
<feature type="helix" evidence="18">
    <location>
        <begin position="1640"/>
        <end position="1645"/>
    </location>
</feature>
<feature type="helix" evidence="18">
    <location>
        <begin position="1649"/>
        <end position="1655"/>
    </location>
</feature>
<feature type="helix" evidence="18">
    <location>
        <begin position="1661"/>
        <end position="1666"/>
    </location>
</feature>
<feature type="helix" evidence="18">
    <location>
        <begin position="1668"/>
        <end position="1673"/>
    </location>
</feature>
<feature type="helix" evidence="18">
    <location>
        <begin position="1681"/>
        <end position="1687"/>
    </location>
</feature>
<feature type="turn" evidence="18">
    <location>
        <begin position="1696"/>
        <end position="1698"/>
    </location>
</feature>
<evidence type="ECO:0000250" key="1"/>
<evidence type="ECO:0000250" key="2">
    <source>
        <dbReference type="UniProtKB" id="P0C6X7"/>
    </source>
</evidence>
<evidence type="ECO:0000250" key="3">
    <source>
        <dbReference type="UniProtKB" id="P0DTD1"/>
    </source>
</evidence>
<evidence type="ECO:0000250" key="4">
    <source>
        <dbReference type="UniProtKB" id="Q008X6"/>
    </source>
</evidence>
<evidence type="ECO:0000255" key="5"/>
<evidence type="ECO:0000255" key="6">
    <source>
        <dbReference type="PROSITE-ProRule" id="PRU01298"/>
    </source>
</evidence>
<evidence type="ECO:0000255" key="7">
    <source>
        <dbReference type="PROSITE-ProRule" id="PRU01300"/>
    </source>
</evidence>
<evidence type="ECO:0000256" key="8">
    <source>
        <dbReference type="SAM" id="MobiDB-lite"/>
    </source>
</evidence>
<evidence type="ECO:0000269" key="9">
    <source>
    </source>
</evidence>
<evidence type="ECO:0000269" key="10">
    <source>
    </source>
</evidence>
<evidence type="ECO:0000269" key="11">
    <source>
    </source>
</evidence>
<evidence type="ECO:0000303" key="12">
    <source>
    </source>
</evidence>
<evidence type="ECO:0000303" key="13">
    <source>
    </source>
</evidence>
<evidence type="ECO:0000305" key="14"/>
<evidence type="ECO:0000312" key="15">
    <source>
        <dbReference type="EMBL" id="AEH26445.1"/>
    </source>
</evidence>
<evidence type="ECO:0007744" key="16">
    <source>
        <dbReference type="PDB" id="5LAC"/>
    </source>
</evidence>
<evidence type="ECO:0007744" key="17">
    <source>
        <dbReference type="PDB" id="5LAK"/>
    </source>
</evidence>
<evidence type="ECO:0007829" key="18">
    <source>
        <dbReference type="PDB" id="5LAC"/>
    </source>
</evidence>
<evidence type="ECO:0007829" key="19">
    <source>
        <dbReference type="PDB" id="5LAK"/>
    </source>
</evidence>
<organism>
    <name type="scientific">Alphamesonivirus 1 (isolate Aedes harrisoni/Cote d'Ivoire/C79/2004)</name>
    <name type="common">CAVV</name>
    <name type="synonym">Cavally virus (isolate C79)</name>
    <dbReference type="NCBI Taxonomy" id="1552985"/>
    <lineage>
        <taxon>Viruses</taxon>
        <taxon>Riboviria</taxon>
        <taxon>Orthornavirae</taxon>
        <taxon>Pisuviricota</taxon>
        <taxon>Pisoniviricetes</taxon>
        <taxon>Nidovirales</taxon>
        <taxon>Mesnidovirineae</taxon>
        <taxon>Mesoniviridae</taxon>
        <taxon>Hexponivirinae</taxon>
        <taxon>Alphamesonivirus</taxon>
        <taxon>Namcalivirus</taxon>
        <taxon>Alphamesonivirus cavallyense</taxon>
    </lineage>
</organism>
<protein>
    <recommendedName>
        <fullName>Replicase polyprotein 1ab</fullName>
        <shortName>pp1ab</shortName>
    </recommendedName>
    <alternativeName>
        <fullName>ORF1ab polyprotein</fullName>
    </alternativeName>
    <component>
        <recommendedName>
            <fullName evidence="14">Putative non-structural protein 1</fullName>
            <shortName>nsp1</shortName>
        </recommendedName>
    </component>
    <component>
        <recommendedName>
            <fullName evidence="12">3C-like proteinase</fullName>
            <shortName>3CL-PRO</shortName>
            <shortName>3CLp</shortName>
            <ecNumber evidence="9 10">3.4.22.-</ecNumber>
        </recommendedName>
        <alternativeName>
            <fullName>M-PRO</fullName>
        </alternativeName>
        <alternativeName>
            <fullName>Non-structural protein 3</fullName>
        </alternativeName>
    </component>
    <component>
        <recommendedName>
            <fullName evidence="14">Putative non-structural protein 3</fullName>
            <shortName>nsp3</shortName>
        </recommendedName>
    </component>
    <component>
        <recommendedName>
            <fullName evidence="14">Putative non-structural protein 4</fullName>
            <shortName>nsp4</shortName>
        </recommendedName>
    </component>
    <component>
        <recommendedName>
            <fullName evidence="14">Putative non-structural protein 5</fullName>
            <shortName>nsp5</shortName>
        </recommendedName>
    </component>
    <component>
        <recommendedName>
            <fullName evidence="14">Putative non-structural protein 6</fullName>
            <shortName>nsp6</shortName>
        </recommendedName>
    </component>
    <component>
        <recommendedName>
            <fullName evidence="14">Putative non-structural protein 7</fullName>
            <shortName>nsp7</shortName>
        </recommendedName>
    </component>
    <component>
        <recommendedName>
            <fullName evidence="14">Putative non-structural protein 8</fullName>
            <shortName>nsp8</shortName>
        </recommendedName>
    </component>
    <component>
        <recommendedName>
            <fullName evidence="14">Putative non-structural protein 9</fullName>
            <shortName>nsp9</shortName>
        </recommendedName>
    </component>
    <component>
        <recommendedName>
            <fullName evidence="13">RNA-directed RNA polymerase</fullName>
            <shortName>Pol</shortName>
            <shortName>RdRp</shortName>
            <ecNumber evidence="14">2.7.7.48</ecNumber>
        </recommendedName>
    </component>
    <component>
        <recommendedName>
            <fullName evidence="13">Helicase</fullName>
            <shortName>Hel</shortName>
            <ecNumber evidence="14">3.6.4.12</ecNumber>
            <ecNumber evidence="14">3.6.4.13</ecNumber>
        </recommendedName>
    </component>
    <component>
        <recommendedName>
            <fullName>Exoribonuclease/N7-guanine methyltransferase</fullName>
            <shortName>ExoN</shortName>
            <ecNumber evidence="14">2.1.1.56</ecNumber>
            <ecNumber evidence="14">3.1.13.-</ecNumber>
        </recommendedName>
    </component>
    <component>
        <recommendedName>
            <fullName evidence="13">Putative 2'-O-methyl transferase</fullName>
            <ecNumber evidence="14">2.1.1.57</ecNumber>
        </recommendedName>
    </component>
</protein>
<proteinExistence type="evidence at protein level"/>